<reference key="1">
    <citation type="journal article" date="2003" name="Proc. Natl. Acad. Sci. U.S.A.">
        <title>Complete genome sequence of Lactobacillus plantarum WCFS1.</title>
        <authorList>
            <person name="Kleerebezem M."/>
            <person name="Boekhorst J."/>
            <person name="van Kranenburg R."/>
            <person name="Molenaar D."/>
            <person name="Kuipers O.P."/>
            <person name="Leer R."/>
            <person name="Tarchini R."/>
            <person name="Peters S.A."/>
            <person name="Sandbrink H.M."/>
            <person name="Fiers M.W.E.J."/>
            <person name="Stiekema W."/>
            <person name="Klein Lankhorst R.M."/>
            <person name="Bron P.A."/>
            <person name="Hoffer S.M."/>
            <person name="Nierop Groot M.N."/>
            <person name="Kerkhoven R."/>
            <person name="De Vries M."/>
            <person name="Ursing B."/>
            <person name="De Vos W.M."/>
            <person name="Siezen R.J."/>
        </authorList>
    </citation>
    <scope>NUCLEOTIDE SEQUENCE [LARGE SCALE GENOMIC DNA]</scope>
    <source>
        <strain>ATCC BAA-793 / NCIMB 8826 / WCFS1</strain>
    </source>
</reference>
<reference key="2">
    <citation type="journal article" date="2012" name="J. Bacteriol.">
        <title>Complete resequencing and reannotation of the Lactobacillus plantarum WCFS1 genome.</title>
        <authorList>
            <person name="Siezen R.J."/>
            <person name="Francke C."/>
            <person name="Renckens B."/>
            <person name="Boekhorst J."/>
            <person name="Wels M."/>
            <person name="Kleerebezem M."/>
            <person name="van Hijum S.A."/>
        </authorList>
    </citation>
    <scope>NUCLEOTIDE SEQUENCE [LARGE SCALE GENOMIC DNA]</scope>
    <scope>GENOME REANNOTATION</scope>
    <source>
        <strain>ATCC BAA-793 / NCIMB 8826 / WCFS1</strain>
    </source>
</reference>
<reference key="3">
    <citation type="journal article" date="2007" name="FEBS J.">
        <title>Many fructosamine 3-kinase homologues in bacteria are ribulosamine/erythrulosamine 3-kinases potentially involved in protein deglycation.</title>
        <authorList>
            <person name="Gemayel R."/>
            <person name="Fortpied J."/>
            <person name="Rzem R."/>
            <person name="Vertommen D."/>
            <person name="Veiga-da-Cunha M."/>
            <person name="Van Schaftingen E."/>
        </authorList>
    </citation>
    <scope>FUNCTION</scope>
    <scope>CATALYTIC ACTIVITY</scope>
    <scope>BIOPHYSICOCHEMICAL PROPERTIES</scope>
</reference>
<organism>
    <name type="scientific">Lactiplantibacillus plantarum (strain ATCC BAA-793 / NCIMB 8826 / WCFS1)</name>
    <name type="common">Lactobacillus plantarum</name>
    <dbReference type="NCBI Taxonomy" id="220668"/>
    <lineage>
        <taxon>Bacteria</taxon>
        <taxon>Bacillati</taxon>
        <taxon>Bacillota</taxon>
        <taxon>Bacilli</taxon>
        <taxon>Lactobacillales</taxon>
        <taxon>Lactobacillaceae</taxon>
        <taxon>Lactiplantibacillus</taxon>
    </lineage>
</organism>
<dbReference type="EC" id="2.7.1.-" evidence="3"/>
<dbReference type="EMBL" id="AL935263">
    <property type="protein sequence ID" value="CCC79236.1"/>
    <property type="molecule type" value="Genomic_DNA"/>
</dbReference>
<dbReference type="RefSeq" id="WP_003644479.1">
    <property type="nucleotide sequence ID" value="NC_004567.2"/>
</dbReference>
<dbReference type="RefSeq" id="YP_004889750.1">
    <property type="nucleotide sequence ID" value="NC_004567.2"/>
</dbReference>
<dbReference type="SMR" id="F9UPU7"/>
<dbReference type="STRING" id="220668.lp_1983"/>
<dbReference type="DNASU" id="1064115"/>
<dbReference type="EnsemblBacteria" id="CCC79236">
    <property type="protein sequence ID" value="CCC79236"/>
    <property type="gene ID" value="lp_1983"/>
</dbReference>
<dbReference type="KEGG" id="lpl:lp_1983"/>
<dbReference type="PATRIC" id="fig|220668.9.peg.1676"/>
<dbReference type="eggNOG" id="COG3001">
    <property type="taxonomic scope" value="Bacteria"/>
</dbReference>
<dbReference type="HOGENOM" id="CLU_036517_0_1_9"/>
<dbReference type="OrthoDB" id="5291879at2"/>
<dbReference type="PhylomeDB" id="F9UPU7"/>
<dbReference type="Proteomes" id="UP000000432">
    <property type="component" value="Chromosome"/>
</dbReference>
<dbReference type="GO" id="GO:0005524">
    <property type="term" value="F:ATP binding"/>
    <property type="evidence" value="ECO:0007669"/>
    <property type="project" value="UniProtKB-KW"/>
</dbReference>
<dbReference type="GO" id="GO:0016301">
    <property type="term" value="F:kinase activity"/>
    <property type="evidence" value="ECO:0007669"/>
    <property type="project" value="UniProtKB-KW"/>
</dbReference>
<dbReference type="GO" id="GO:0016773">
    <property type="term" value="F:phosphotransferase activity, alcohol group as acceptor"/>
    <property type="evidence" value="ECO:0000314"/>
    <property type="project" value="UniProtKB"/>
</dbReference>
<dbReference type="GO" id="GO:0102193">
    <property type="term" value="F:protein-ribulosamine 3-kinase activity"/>
    <property type="evidence" value="ECO:0007669"/>
    <property type="project" value="RHEA"/>
</dbReference>
<dbReference type="Gene3D" id="3.90.1200.10">
    <property type="match status" value="1"/>
</dbReference>
<dbReference type="Gene3D" id="3.30.200.20">
    <property type="entry name" value="Phosphorylase Kinase, domain 1"/>
    <property type="match status" value="1"/>
</dbReference>
<dbReference type="InterPro" id="IPR016477">
    <property type="entry name" value="Fructo-/Ketosamine-3-kinase"/>
</dbReference>
<dbReference type="InterPro" id="IPR011009">
    <property type="entry name" value="Kinase-like_dom_sf"/>
</dbReference>
<dbReference type="PANTHER" id="PTHR12149">
    <property type="entry name" value="FRUCTOSAMINE 3 KINASE-RELATED PROTEIN"/>
    <property type="match status" value="1"/>
</dbReference>
<dbReference type="PANTHER" id="PTHR12149:SF8">
    <property type="entry name" value="PROTEIN-RIBULOSAMINE 3-KINASE"/>
    <property type="match status" value="1"/>
</dbReference>
<dbReference type="Pfam" id="PF03881">
    <property type="entry name" value="Fructosamin_kin"/>
    <property type="match status" value="1"/>
</dbReference>
<dbReference type="PIRSF" id="PIRSF006221">
    <property type="entry name" value="Ketosamine-3-kinase"/>
    <property type="match status" value="1"/>
</dbReference>
<dbReference type="SUPFAM" id="SSF56112">
    <property type="entry name" value="Protein kinase-like (PK-like)"/>
    <property type="match status" value="1"/>
</dbReference>
<feature type="chain" id="PRO_0000448291" description="Probable ketoamine kinase lp_1983">
    <location>
        <begin position="1"/>
        <end position="280"/>
    </location>
</feature>
<feature type="active site" description="Proton acceptor" evidence="1">
    <location>
        <position position="189"/>
    </location>
</feature>
<feature type="binding site" evidence="2">
    <location>
        <begin position="87"/>
        <end position="89"/>
    </location>
    <ligand>
        <name>ATP</name>
        <dbReference type="ChEBI" id="CHEBI:30616"/>
    </ligand>
</feature>
<gene>
    <name type="ordered locus">lp_1983</name>
</gene>
<protein>
    <recommendedName>
        <fullName evidence="4">Probable ketoamine kinase lp_1983</fullName>
        <ecNumber evidence="3">2.7.1.-</ecNumber>
    </recommendedName>
</protein>
<keyword id="KW-0067">ATP-binding</keyword>
<keyword id="KW-0418">Kinase</keyword>
<keyword id="KW-0547">Nucleotide-binding</keyword>
<keyword id="KW-1185">Reference proteome</keyword>
<keyword id="KW-0808">Transferase</keyword>
<comment type="function">
    <text evidence="3">Ketoamine kinase that phosphorylates ketoamines, such as erythruloselysine, erythrulosecadaverine, ribuloselysine and ribulosecadaverine, on the third carbon of the sugar moiety to generate ketoamine 3-phosphate (PubMed:17681011). Has higher activity on free lysine (erythruloselysine and ribuloselysine), than on ribuloselysine and erythruloselysine residues on glycated proteins (PubMed:17681011).</text>
</comment>
<comment type="catalytic activity">
    <reaction evidence="3">
        <text>N(6)-(D-ribulosyl)-L-lysine + ATP = N(6)-(3-O-phospho-D-ribulosyl)-L-lysine + ADP + H(+)</text>
        <dbReference type="Rhea" id="RHEA:61400"/>
        <dbReference type="ChEBI" id="CHEBI:15378"/>
        <dbReference type="ChEBI" id="CHEBI:30616"/>
        <dbReference type="ChEBI" id="CHEBI:144590"/>
        <dbReference type="ChEBI" id="CHEBI:144611"/>
        <dbReference type="ChEBI" id="CHEBI:456216"/>
    </reaction>
    <physiologicalReaction direction="left-to-right" evidence="3">
        <dbReference type="Rhea" id="RHEA:61401"/>
    </physiologicalReaction>
</comment>
<comment type="catalytic activity">
    <reaction evidence="3">
        <text>N-(D-ribulosyl)-cadaverine + ATP = N-(3-O-phospho-D-ribulosyl)-cadaverine + ADP + H(+)</text>
        <dbReference type="Rhea" id="RHEA:61404"/>
        <dbReference type="ChEBI" id="CHEBI:15378"/>
        <dbReference type="ChEBI" id="CHEBI:30616"/>
        <dbReference type="ChEBI" id="CHEBI:144612"/>
        <dbReference type="ChEBI" id="CHEBI:144614"/>
        <dbReference type="ChEBI" id="CHEBI:456216"/>
    </reaction>
    <physiologicalReaction direction="left-to-right" evidence="3">
        <dbReference type="Rhea" id="RHEA:61405"/>
    </physiologicalReaction>
</comment>
<comment type="catalytic activity">
    <reaction evidence="3">
        <text>N(6)-(D-erythrulosyl)-L-lysine + ATP = N(6)-(3-O-phospho-D-erythrulosyl)-L-lysine + ADP + H(+)</text>
        <dbReference type="Rhea" id="RHEA:61408"/>
        <dbReference type="ChEBI" id="CHEBI:15378"/>
        <dbReference type="ChEBI" id="CHEBI:30616"/>
        <dbReference type="ChEBI" id="CHEBI:144617"/>
        <dbReference type="ChEBI" id="CHEBI:144618"/>
        <dbReference type="ChEBI" id="CHEBI:456216"/>
    </reaction>
    <physiologicalReaction direction="left-to-right" evidence="3">
        <dbReference type="Rhea" id="RHEA:61409"/>
    </physiologicalReaction>
</comment>
<comment type="catalytic activity">
    <reaction evidence="3">
        <text>N-(D-erythrulosyl)-cadaverine + ATP = N-(3-O-phospho-D-erythrulosyl)-cadaverine + ADP + H(+)</text>
        <dbReference type="Rhea" id="RHEA:61412"/>
        <dbReference type="ChEBI" id="CHEBI:15378"/>
        <dbReference type="ChEBI" id="CHEBI:30616"/>
        <dbReference type="ChEBI" id="CHEBI:144619"/>
        <dbReference type="ChEBI" id="CHEBI:144620"/>
        <dbReference type="ChEBI" id="CHEBI:456216"/>
    </reaction>
    <physiologicalReaction direction="left-to-right" evidence="3">
        <dbReference type="Rhea" id="RHEA:61413"/>
    </physiologicalReaction>
</comment>
<comment type="catalytic activity">
    <reaction evidence="3">
        <text>N(6)-D-ribulosyl-L-lysyl-[protein] + ATP = N(6)-(3-O-phospho-D-ribulosyl)-L-lysyl-[protein] + ADP + H(+)</text>
        <dbReference type="Rhea" id="RHEA:48432"/>
        <dbReference type="Rhea" id="RHEA-COMP:12103"/>
        <dbReference type="Rhea" id="RHEA-COMP:12104"/>
        <dbReference type="ChEBI" id="CHEBI:15378"/>
        <dbReference type="ChEBI" id="CHEBI:30616"/>
        <dbReference type="ChEBI" id="CHEBI:90418"/>
        <dbReference type="ChEBI" id="CHEBI:90420"/>
        <dbReference type="ChEBI" id="CHEBI:456216"/>
    </reaction>
    <physiologicalReaction direction="left-to-right" evidence="3">
        <dbReference type="Rhea" id="RHEA:48433"/>
    </physiologicalReaction>
</comment>
<comment type="catalytic activity">
    <reaction evidence="3">
        <text>N(6)-(D-erythrulosyl)-L-lysyl-[protein] + ATP = N(6)-(3-O-phospho-D-erythrulosyl)-L-lysyl-[protein] + ADP + H(+)</text>
        <dbReference type="Rhea" id="RHEA:61396"/>
        <dbReference type="Rhea" id="RHEA-COMP:15794"/>
        <dbReference type="Rhea" id="RHEA-COMP:15799"/>
        <dbReference type="ChEBI" id="CHEBI:15378"/>
        <dbReference type="ChEBI" id="CHEBI:30616"/>
        <dbReference type="ChEBI" id="CHEBI:144587"/>
        <dbReference type="ChEBI" id="CHEBI:144624"/>
        <dbReference type="ChEBI" id="CHEBI:456216"/>
    </reaction>
    <physiologicalReaction direction="left-to-right" evidence="3">
        <dbReference type="Rhea" id="RHEA:61397"/>
    </physiologicalReaction>
</comment>
<comment type="biophysicochemical properties">
    <kinetics>
        <KM evidence="3">300 uM for free ribuloselysine</KM>
        <KM evidence="3">340 uM for free ribulosecadaverine</KM>
        <KM evidence="3">60 uM for free erythruloselysine</KM>
        <KM evidence="3">63 uM for free erythrulosecadaverine</KM>
        <Vmax evidence="3">510.0 nmol/min/mg enzyme with free ribuloselysine as substrate</Vmax>
        <Vmax evidence="3">2860.0 nmol/min/mg enzyme with free ribulosecadaverine as substrate</Vmax>
        <Vmax evidence="3">610.0 nmol/min/mg enzyme with free erythruloselysine as substrate</Vmax>
        <Vmax evidence="3">800.0 nmol/min/mg enzyme with free erythrulosecadaverine as substrate</Vmax>
        <Vmax evidence="3">16.0 nmol/min/mg enzyme with ribuloselysyl-protein (lysozyme) as substrate</Vmax>
        <Vmax evidence="3">3.8 nmol/min/mg enzyme with erythruloselysyl-protein (lysozyme) as substrate</Vmax>
    </kinetics>
</comment>
<comment type="similarity">
    <text evidence="4">Belongs to the fructosamine kinase family.</text>
</comment>
<sequence>MHLTKTWLAQLPLTDIQQVQPVSGGDINAAFQIITRHHQYFLKVQPHNDVTFFDHEVAGLRLLGAVTKTPRVIASGTIATDGYLLLDWLATGTGSQSALGAAVAKVHHQHHAQFGLDHDFTAGKLPKINHWQTDWATFYTQQRLDVLVNLAKEHHLWSETREMHYHRLRQQLLQDSHMHTVKPSLLHGDLWSGNYLFDTTGTPVLIDPDVFYGDREMDLAMTTIFGGFDTDFYQAYQAAYPVAPGMQDRLPSYQLYYLLAHLNLFGETYGPAVDRILMQY</sequence>
<evidence type="ECO:0000250" key="1">
    <source>
        <dbReference type="UniProtKB" id="P9WI99"/>
    </source>
</evidence>
<evidence type="ECO:0000250" key="2">
    <source>
        <dbReference type="UniProtKB" id="Q9HA64"/>
    </source>
</evidence>
<evidence type="ECO:0000269" key="3">
    <source>
    </source>
</evidence>
<evidence type="ECO:0000305" key="4"/>
<proteinExistence type="evidence at protein level"/>
<name>KT3K_LACPL</name>
<accession>F9UPU7</accession>